<keyword id="KW-0968">Cytoplasmic vesicle</keyword>
<keyword id="KW-1015">Disulfide bond</keyword>
<keyword id="KW-0325">Glycoprotein</keyword>
<keyword id="KW-0378">Hydrolase</keyword>
<keyword id="KW-0458">Lysosome</keyword>
<keyword id="KW-0645">Protease</keyword>
<keyword id="KW-1185">Reference proteome</keyword>
<keyword id="KW-0964">Secreted</keyword>
<keyword id="KW-0732">Signal</keyword>
<keyword id="KW-0788">Thiol protease</keyword>
<keyword id="KW-0865">Zymogen</keyword>
<name>CATS_SAIBB</name>
<protein>
    <recommendedName>
        <fullName>Cathepsin S</fullName>
        <ecNumber>3.4.22.27</ecNumber>
    </recommendedName>
</protein>
<comment type="function">
    <text evidence="2">Thiol protease. Key protease responsible for the removal of the invariant chain from MHC class II molecules and MHC class II antigen presentation. The bond-specificity of this proteinase is in part similar to the specificities of cathepsin L.</text>
</comment>
<comment type="catalytic activity">
    <reaction>
        <text>Similar to cathepsin L, but with much less activity on Z-Phe-Arg-|-NHMec, and more activity on the Z-Val-Val-Arg-|-Xaa compound.</text>
        <dbReference type="EC" id="3.4.22.27"/>
    </reaction>
</comment>
<comment type="subcellular location">
    <subcellularLocation>
        <location evidence="2">Lysosome</location>
    </subcellularLocation>
    <subcellularLocation>
        <location evidence="2">Secreted</location>
    </subcellularLocation>
    <subcellularLocation>
        <location evidence="2">Cytoplasmic vesicle</location>
        <location evidence="2">Phagosome</location>
    </subcellularLocation>
</comment>
<comment type="similarity">
    <text evidence="4 5 6">Belongs to the peptidase C1 family.</text>
</comment>
<dbReference type="EC" id="3.4.22.27"/>
<dbReference type="EMBL" id="AY156691">
    <property type="protein sequence ID" value="AAO13008.1"/>
    <property type="molecule type" value="mRNA"/>
</dbReference>
<dbReference type="RefSeq" id="NP_001266935.1">
    <property type="nucleotide sequence ID" value="NM_001280006.1"/>
</dbReference>
<dbReference type="SMR" id="Q8HY82"/>
<dbReference type="STRING" id="39432.ENSSBOP00000021880"/>
<dbReference type="MEROPS" id="C01.034"/>
<dbReference type="MEROPS" id="I29.004"/>
<dbReference type="GlyCosmos" id="Q8HY82">
    <property type="glycosylation" value="1 site, No reported glycans"/>
</dbReference>
<dbReference type="GeneID" id="101044698"/>
<dbReference type="CTD" id="1520"/>
<dbReference type="Proteomes" id="UP000233220">
    <property type="component" value="Whole Genome Shotgun Assembly"/>
</dbReference>
<dbReference type="GO" id="GO:0005615">
    <property type="term" value="C:extracellular space"/>
    <property type="evidence" value="ECO:0000250"/>
    <property type="project" value="UniProtKB"/>
</dbReference>
<dbReference type="GO" id="GO:0005764">
    <property type="term" value="C:lysosome"/>
    <property type="evidence" value="ECO:0007669"/>
    <property type="project" value="UniProtKB-SubCell"/>
</dbReference>
<dbReference type="GO" id="GO:0045335">
    <property type="term" value="C:phagocytic vesicle"/>
    <property type="evidence" value="ECO:0000250"/>
    <property type="project" value="UniProtKB"/>
</dbReference>
<dbReference type="GO" id="GO:0004197">
    <property type="term" value="F:cysteine-type endopeptidase activity"/>
    <property type="evidence" value="ECO:0007669"/>
    <property type="project" value="UniProtKB-EC"/>
</dbReference>
<dbReference type="GO" id="GO:0019886">
    <property type="term" value="P:antigen processing and presentation of exogenous peptide antigen via MHC class II"/>
    <property type="evidence" value="ECO:0000250"/>
    <property type="project" value="UniProtKB"/>
</dbReference>
<dbReference type="GO" id="GO:0006508">
    <property type="term" value="P:proteolysis"/>
    <property type="evidence" value="ECO:0007669"/>
    <property type="project" value="UniProtKB-KW"/>
</dbReference>
<dbReference type="CDD" id="cd02248">
    <property type="entry name" value="Peptidase_C1A"/>
    <property type="match status" value="1"/>
</dbReference>
<dbReference type="FunFam" id="1.10.287.2250:FF:000003">
    <property type="entry name" value="Cathepsin L"/>
    <property type="match status" value="1"/>
</dbReference>
<dbReference type="FunFam" id="3.90.70.10:FF:000006">
    <property type="entry name" value="Cathepsin S"/>
    <property type="match status" value="1"/>
</dbReference>
<dbReference type="Gene3D" id="3.90.70.10">
    <property type="entry name" value="Cysteine proteinases"/>
    <property type="match status" value="1"/>
</dbReference>
<dbReference type="InterPro" id="IPR038765">
    <property type="entry name" value="Papain-like_cys_pep_sf"/>
</dbReference>
<dbReference type="InterPro" id="IPR025661">
    <property type="entry name" value="Pept_asp_AS"/>
</dbReference>
<dbReference type="InterPro" id="IPR000169">
    <property type="entry name" value="Pept_cys_AS"/>
</dbReference>
<dbReference type="InterPro" id="IPR025660">
    <property type="entry name" value="Pept_his_AS"/>
</dbReference>
<dbReference type="InterPro" id="IPR013128">
    <property type="entry name" value="Peptidase_C1A"/>
</dbReference>
<dbReference type="InterPro" id="IPR000668">
    <property type="entry name" value="Peptidase_C1A_C"/>
</dbReference>
<dbReference type="InterPro" id="IPR039417">
    <property type="entry name" value="Peptidase_C1A_papain-like"/>
</dbReference>
<dbReference type="InterPro" id="IPR013201">
    <property type="entry name" value="Prot_inhib_I29"/>
</dbReference>
<dbReference type="PANTHER" id="PTHR12411">
    <property type="entry name" value="CYSTEINE PROTEASE FAMILY C1-RELATED"/>
    <property type="match status" value="1"/>
</dbReference>
<dbReference type="Pfam" id="PF08246">
    <property type="entry name" value="Inhibitor_I29"/>
    <property type="match status" value="1"/>
</dbReference>
<dbReference type="Pfam" id="PF00112">
    <property type="entry name" value="Peptidase_C1"/>
    <property type="match status" value="1"/>
</dbReference>
<dbReference type="PRINTS" id="PR00705">
    <property type="entry name" value="PAPAIN"/>
</dbReference>
<dbReference type="SMART" id="SM00848">
    <property type="entry name" value="Inhibitor_I29"/>
    <property type="match status" value="1"/>
</dbReference>
<dbReference type="SMART" id="SM00645">
    <property type="entry name" value="Pept_C1"/>
    <property type="match status" value="1"/>
</dbReference>
<dbReference type="SUPFAM" id="SSF54001">
    <property type="entry name" value="Cysteine proteinases"/>
    <property type="match status" value="1"/>
</dbReference>
<dbReference type="PROSITE" id="PS00640">
    <property type="entry name" value="THIOL_PROTEASE_ASN"/>
    <property type="match status" value="1"/>
</dbReference>
<dbReference type="PROSITE" id="PS00139">
    <property type="entry name" value="THIOL_PROTEASE_CYS"/>
    <property type="match status" value="1"/>
</dbReference>
<dbReference type="PROSITE" id="PS00639">
    <property type="entry name" value="THIOL_PROTEASE_HIS"/>
    <property type="match status" value="1"/>
</dbReference>
<organism>
    <name type="scientific">Saimiri boliviensis boliviensis</name>
    <name type="common">Bolivian squirrel monkey</name>
    <dbReference type="NCBI Taxonomy" id="39432"/>
    <lineage>
        <taxon>Eukaryota</taxon>
        <taxon>Metazoa</taxon>
        <taxon>Chordata</taxon>
        <taxon>Craniata</taxon>
        <taxon>Vertebrata</taxon>
        <taxon>Euteleostomi</taxon>
        <taxon>Mammalia</taxon>
        <taxon>Eutheria</taxon>
        <taxon>Euarchontoglires</taxon>
        <taxon>Primates</taxon>
        <taxon>Haplorrhini</taxon>
        <taxon>Platyrrhini</taxon>
        <taxon>Cebidae</taxon>
        <taxon>Saimiriinae</taxon>
        <taxon>Saimiri</taxon>
    </lineage>
</organism>
<sequence length="330" mass="37346">MKQLVCVLFVCSSAVTQLHKDPTLDHHWNLWKKTYGKQYKEKNEEAVRRLIWEKNLKFVMLHNLEHSMGMHSYDLGMNHLGDMTSEEVMSLMSSLRVPNQWQRNITYKSNPNQMLPDSVDWREKGCVTEVKYQGSCGACWAFSAVGALEAQLKLKTGKLVSLSAQNLVDCSEKYGNKGCNGGFMTEAFQYIIDNKGIDSEASYPYKATDQKCQYDSKYRAATCSKYTELPYGREDVLKEAVANKGPVCVGVDASHPSFFLYRSGVYYDPACTQKVNHGVLVIGYGDLNGKEYWLVKNSWGSNFGEQGYIRMARNKGNHCGIASYPSYPEI</sequence>
<reference key="1">
    <citation type="journal article" date="2003" name="Protein Expr. Purif.">
        <title>Cloning, expression, purification, and activity of dog (Canis familiaris) and monkey (Saimiri boliviensis) cathepsin S.</title>
        <authorList>
            <person name="Baker S.M."/>
            <person name="Karlsson L."/>
            <person name="Thurmond R.L."/>
        </authorList>
    </citation>
    <scope>NUCLEOTIDE SEQUENCE [MRNA]</scope>
</reference>
<feature type="signal peptide" evidence="3">
    <location>
        <begin position="1"/>
        <end position="17"/>
    </location>
</feature>
<feature type="propeptide" id="PRO_0000026319" description="Activation peptide" evidence="1">
    <location>
        <begin position="18"/>
        <end position="114"/>
    </location>
</feature>
<feature type="chain" id="PRO_0000026320" description="Cathepsin S">
    <location>
        <begin position="115"/>
        <end position="330"/>
    </location>
</feature>
<feature type="active site" evidence="1">
    <location>
        <position position="139"/>
    </location>
</feature>
<feature type="active site" evidence="1">
    <location>
        <position position="277"/>
    </location>
</feature>
<feature type="active site" evidence="1">
    <location>
        <position position="297"/>
    </location>
</feature>
<feature type="glycosylation site" description="N-linked (GlcNAc...) asparagine" evidence="3">
    <location>
        <position position="104"/>
    </location>
</feature>
<feature type="disulfide bond" evidence="1">
    <location>
        <begin position="126"/>
        <end position="223"/>
    </location>
</feature>
<feature type="disulfide bond" evidence="1">
    <location>
        <begin position="136"/>
        <end position="179"/>
    </location>
</feature>
<feature type="disulfide bond" evidence="1">
    <location>
        <begin position="170"/>
        <end position="212"/>
    </location>
</feature>
<feature type="disulfide bond" evidence="1">
    <location>
        <begin position="271"/>
        <end position="319"/>
    </location>
</feature>
<accession>Q8HY82</accession>
<proteinExistence type="evidence at transcript level"/>
<evidence type="ECO:0000250" key="1"/>
<evidence type="ECO:0000250" key="2">
    <source>
        <dbReference type="UniProtKB" id="P25774"/>
    </source>
</evidence>
<evidence type="ECO:0000255" key="3"/>
<evidence type="ECO:0000255" key="4">
    <source>
        <dbReference type="PROSITE-ProRule" id="PRU10088"/>
    </source>
</evidence>
<evidence type="ECO:0000255" key="5">
    <source>
        <dbReference type="PROSITE-ProRule" id="PRU10089"/>
    </source>
</evidence>
<evidence type="ECO:0000255" key="6">
    <source>
        <dbReference type="PROSITE-ProRule" id="PRU10090"/>
    </source>
</evidence>
<gene>
    <name type="primary">CTSS</name>
</gene>